<evidence type="ECO:0000255" key="1">
    <source>
        <dbReference type="HAMAP-Rule" id="MF_00050"/>
    </source>
</evidence>
<comment type="function">
    <text evidence="1">Associates with the EF-Tu.GDP complex and induces the exchange of GDP to GTP. It remains bound to the aminoacyl-tRNA.EF-Tu.GTP complex up to the GTP hydrolysis stage on the ribosome.</text>
</comment>
<comment type="subcellular location">
    <subcellularLocation>
        <location evidence="1">Cytoplasm</location>
    </subcellularLocation>
</comment>
<comment type="similarity">
    <text evidence="1">Belongs to the EF-Ts family.</text>
</comment>
<gene>
    <name evidence="1" type="primary">tsf</name>
    <name type="ordered locus">Ecaj_0516</name>
</gene>
<accession>Q3YRV3</accession>
<keyword id="KW-0963">Cytoplasm</keyword>
<keyword id="KW-0251">Elongation factor</keyword>
<keyword id="KW-0648">Protein biosynthesis</keyword>
<reference key="1">
    <citation type="journal article" date="2006" name="J. Bacteriol.">
        <title>The genome of the obligately intracellular bacterium Ehrlichia canis reveals themes of complex membrane structure and immune evasion strategies.</title>
        <authorList>
            <person name="Mavromatis K."/>
            <person name="Doyle C.K."/>
            <person name="Lykidis A."/>
            <person name="Ivanova N."/>
            <person name="Francino M.P."/>
            <person name="Chain P."/>
            <person name="Shin M."/>
            <person name="Malfatti S."/>
            <person name="Larimer F."/>
            <person name="Copeland A."/>
            <person name="Detter J.C."/>
            <person name="Land M."/>
            <person name="Richardson P.M."/>
            <person name="Yu X.J."/>
            <person name="Walker D.H."/>
            <person name="McBride J.W."/>
            <person name="Kyrpides N.C."/>
        </authorList>
    </citation>
    <scope>NUCLEOTIDE SEQUENCE [LARGE SCALE GENOMIC DNA]</scope>
    <source>
        <strain>Jake</strain>
    </source>
</reference>
<protein>
    <recommendedName>
        <fullName evidence="1">Elongation factor Ts</fullName>
        <shortName evidence="1">EF-Ts</shortName>
    </recommendedName>
</protein>
<organism>
    <name type="scientific">Ehrlichia canis (strain Jake)</name>
    <dbReference type="NCBI Taxonomy" id="269484"/>
    <lineage>
        <taxon>Bacteria</taxon>
        <taxon>Pseudomonadati</taxon>
        <taxon>Pseudomonadota</taxon>
        <taxon>Alphaproteobacteria</taxon>
        <taxon>Rickettsiales</taxon>
        <taxon>Anaplasmataceae</taxon>
        <taxon>Ehrlichia</taxon>
    </lineage>
</organism>
<dbReference type="EMBL" id="CP000107">
    <property type="protein sequence ID" value="AAZ68552.1"/>
    <property type="molecule type" value="Genomic_DNA"/>
</dbReference>
<dbReference type="RefSeq" id="WP_011304630.1">
    <property type="nucleotide sequence ID" value="NC_007354.1"/>
</dbReference>
<dbReference type="SMR" id="Q3YRV3"/>
<dbReference type="FunCoup" id="Q3YRV3">
    <property type="interactions" value="337"/>
</dbReference>
<dbReference type="STRING" id="269484.Ecaj_0516"/>
<dbReference type="KEGG" id="ecn:Ecaj_0516"/>
<dbReference type="eggNOG" id="COG0264">
    <property type="taxonomic scope" value="Bacteria"/>
</dbReference>
<dbReference type="HOGENOM" id="CLU_047155_2_0_5"/>
<dbReference type="InParanoid" id="Q3YRV3"/>
<dbReference type="Proteomes" id="UP000000435">
    <property type="component" value="Chromosome"/>
</dbReference>
<dbReference type="GO" id="GO:0005737">
    <property type="term" value="C:cytoplasm"/>
    <property type="evidence" value="ECO:0007669"/>
    <property type="project" value="UniProtKB-SubCell"/>
</dbReference>
<dbReference type="GO" id="GO:0003746">
    <property type="term" value="F:translation elongation factor activity"/>
    <property type="evidence" value="ECO:0007669"/>
    <property type="project" value="UniProtKB-UniRule"/>
</dbReference>
<dbReference type="CDD" id="cd14275">
    <property type="entry name" value="UBA_EF-Ts"/>
    <property type="match status" value="1"/>
</dbReference>
<dbReference type="FunFam" id="1.10.286.20:FF:000001">
    <property type="entry name" value="Elongation factor Ts"/>
    <property type="match status" value="1"/>
</dbReference>
<dbReference type="FunFam" id="1.10.8.10:FF:000001">
    <property type="entry name" value="Elongation factor Ts"/>
    <property type="match status" value="1"/>
</dbReference>
<dbReference type="Gene3D" id="1.10.286.20">
    <property type="match status" value="1"/>
</dbReference>
<dbReference type="Gene3D" id="1.10.8.10">
    <property type="entry name" value="DNA helicase RuvA subunit, C-terminal domain"/>
    <property type="match status" value="1"/>
</dbReference>
<dbReference type="Gene3D" id="3.30.479.20">
    <property type="entry name" value="Elongation factor Ts, dimerisation domain"/>
    <property type="match status" value="2"/>
</dbReference>
<dbReference type="HAMAP" id="MF_00050">
    <property type="entry name" value="EF_Ts"/>
    <property type="match status" value="1"/>
</dbReference>
<dbReference type="InterPro" id="IPR036402">
    <property type="entry name" value="EF-Ts_dimer_sf"/>
</dbReference>
<dbReference type="InterPro" id="IPR001816">
    <property type="entry name" value="Transl_elong_EFTs/EF1B"/>
</dbReference>
<dbReference type="InterPro" id="IPR014039">
    <property type="entry name" value="Transl_elong_EFTs/EF1B_dimer"/>
</dbReference>
<dbReference type="InterPro" id="IPR018101">
    <property type="entry name" value="Transl_elong_Ts_CS"/>
</dbReference>
<dbReference type="InterPro" id="IPR009060">
    <property type="entry name" value="UBA-like_sf"/>
</dbReference>
<dbReference type="NCBIfam" id="TIGR00116">
    <property type="entry name" value="tsf"/>
    <property type="match status" value="1"/>
</dbReference>
<dbReference type="PANTHER" id="PTHR11741">
    <property type="entry name" value="ELONGATION FACTOR TS"/>
    <property type="match status" value="1"/>
</dbReference>
<dbReference type="PANTHER" id="PTHR11741:SF0">
    <property type="entry name" value="ELONGATION FACTOR TS, MITOCHONDRIAL"/>
    <property type="match status" value="1"/>
</dbReference>
<dbReference type="Pfam" id="PF00889">
    <property type="entry name" value="EF_TS"/>
    <property type="match status" value="1"/>
</dbReference>
<dbReference type="SUPFAM" id="SSF54713">
    <property type="entry name" value="Elongation factor Ts (EF-Ts), dimerisation domain"/>
    <property type="match status" value="1"/>
</dbReference>
<dbReference type="SUPFAM" id="SSF46934">
    <property type="entry name" value="UBA-like"/>
    <property type="match status" value="1"/>
</dbReference>
<dbReference type="PROSITE" id="PS01126">
    <property type="entry name" value="EF_TS_1"/>
    <property type="match status" value="1"/>
</dbReference>
<dbReference type="PROSITE" id="PS01127">
    <property type="entry name" value="EF_TS_2"/>
    <property type="match status" value="1"/>
</dbReference>
<feature type="chain" id="PRO_0000241479" description="Elongation factor Ts">
    <location>
        <begin position="1"/>
        <end position="288"/>
    </location>
</feature>
<feature type="region of interest" description="Involved in Mg(2+) ion dislocation from EF-Tu" evidence="1">
    <location>
        <begin position="79"/>
        <end position="82"/>
    </location>
</feature>
<sequence>MKIDISAIKKLRDLTGAGVGDCKEALSSCDGDIEKAKNYLREQGIAKAYKKSTKDVSDGLIAIHVDGNKGAILEVNSETDFVARNEKFQKLVLNLVSLANQYATESIEDFLKHEYISGTSVHDEIMSNIAIIGENIHLNKIGCLSVNSGVVSGYIHNPVIDNLGKIGAIVALESNGDSEKLKVLAKQIAMHIVAAKPEALSLDVLDKDLLNKEREIIKKQVDQLNKPAAVAEKIIDGRMAKFYQDVVLLDQVFVMDSQLTISELVKRKESELAETINLIGYKLFVINK</sequence>
<proteinExistence type="inferred from homology"/>
<name>EFTS_EHRCJ</name>